<evidence type="ECO:0000250" key="1"/>
<evidence type="ECO:0000255" key="2"/>
<evidence type="ECO:0000305" key="3"/>
<geneLocation type="mitochondrion"/>
<gene>
    <name type="primary">MT-ND6</name>
    <name type="synonym">MTND6</name>
    <name type="synonym">NADH6</name>
    <name type="synonym">ND6</name>
</gene>
<keyword id="KW-0249">Electron transport</keyword>
<keyword id="KW-0472">Membrane</keyword>
<keyword id="KW-0496">Mitochondrion</keyword>
<keyword id="KW-0520">NAD</keyword>
<keyword id="KW-0679">Respiratory chain</keyword>
<keyword id="KW-1278">Translocase</keyword>
<keyword id="KW-0812">Transmembrane</keyword>
<keyword id="KW-1133">Transmembrane helix</keyword>
<keyword id="KW-0813">Transport</keyword>
<keyword id="KW-0830">Ubiquinone</keyword>
<protein>
    <recommendedName>
        <fullName>NADH-ubiquinone oxidoreductase chain 6</fullName>
        <ecNumber>7.1.1.2</ecNumber>
    </recommendedName>
    <alternativeName>
        <fullName>NADH dehydrogenase subunit 6</fullName>
    </alternativeName>
</protein>
<name>NU6M_BRAMA</name>
<dbReference type="EC" id="7.1.1.2"/>
<dbReference type="EMBL" id="X73923">
    <property type="protein sequence ID" value="CAA52128.1"/>
    <property type="molecule type" value="Genomic_DNA"/>
</dbReference>
<dbReference type="PIR" id="S44404">
    <property type="entry name" value="S44404"/>
</dbReference>
<dbReference type="GO" id="GO:0031966">
    <property type="term" value="C:mitochondrial membrane"/>
    <property type="evidence" value="ECO:0007669"/>
    <property type="project" value="UniProtKB-SubCell"/>
</dbReference>
<dbReference type="GO" id="GO:0008137">
    <property type="term" value="F:NADH dehydrogenase (ubiquinone) activity"/>
    <property type="evidence" value="ECO:0007669"/>
    <property type="project" value="UniProtKB-EC"/>
</dbReference>
<dbReference type="Gene3D" id="1.20.120.1200">
    <property type="entry name" value="NADH-ubiquinone/plastoquinone oxidoreductase chain 6, subunit NuoJ"/>
    <property type="match status" value="1"/>
</dbReference>
<dbReference type="InterPro" id="IPR050269">
    <property type="entry name" value="ComplexI_Subunit6"/>
</dbReference>
<dbReference type="InterPro" id="IPR001457">
    <property type="entry name" value="NADH_UbQ/plastoQ_OxRdtase_su6"/>
</dbReference>
<dbReference type="InterPro" id="IPR042106">
    <property type="entry name" value="Nuo/plastoQ_OxRdtase_6_NuoJ"/>
</dbReference>
<dbReference type="PANTHER" id="PTHR11435">
    <property type="entry name" value="NADH UBIQUINONE OXIDOREDUCTASE SUBUNIT ND6"/>
    <property type="match status" value="1"/>
</dbReference>
<dbReference type="PANTHER" id="PTHR11435:SF1">
    <property type="entry name" value="NADH-UBIQUINONE OXIDOREDUCTASE CHAIN 6"/>
    <property type="match status" value="1"/>
</dbReference>
<dbReference type="Pfam" id="PF00499">
    <property type="entry name" value="Oxidored_q3"/>
    <property type="match status" value="1"/>
</dbReference>
<reference key="1">
    <citation type="journal article" date="1994" name="Curr. Genet.">
        <title>Intragenic rearrangements in the mitochondrial NADH dehydrogenase subunit 6 gene of vertebrates.</title>
        <authorList>
            <person name="Moum T."/>
            <person name="Willassen N.P."/>
            <person name="Johansen S."/>
        </authorList>
    </citation>
    <scope>NUCLEOTIDE SEQUENCE [GENOMIC DNA]</scope>
</reference>
<accession>P43195</accession>
<proteinExistence type="inferred from homology"/>
<comment type="function">
    <text evidence="1">Core subunit of the mitochondrial membrane respiratory chain NADH dehydrogenase (Complex I) that is believed to belong to the minimal assembly required for catalysis. Complex I functions in the transfer of electrons from NADH to the respiratory chain. The immediate electron acceptor for the enzyme is believed to be ubiquinone (By similarity).</text>
</comment>
<comment type="catalytic activity">
    <reaction>
        <text>a ubiquinone + NADH + 5 H(+)(in) = a ubiquinol + NAD(+) + 4 H(+)(out)</text>
        <dbReference type="Rhea" id="RHEA:29091"/>
        <dbReference type="Rhea" id="RHEA-COMP:9565"/>
        <dbReference type="Rhea" id="RHEA-COMP:9566"/>
        <dbReference type="ChEBI" id="CHEBI:15378"/>
        <dbReference type="ChEBI" id="CHEBI:16389"/>
        <dbReference type="ChEBI" id="CHEBI:17976"/>
        <dbReference type="ChEBI" id="CHEBI:57540"/>
        <dbReference type="ChEBI" id="CHEBI:57945"/>
        <dbReference type="EC" id="7.1.1.2"/>
    </reaction>
</comment>
<comment type="subcellular location">
    <subcellularLocation>
        <location evidence="3">Mitochondrion membrane</location>
        <topology evidence="3">Multi-pass membrane protein</topology>
    </subcellularLocation>
</comment>
<comment type="similarity">
    <text evidence="3">Belongs to the complex I subunit 6 family.</text>
</comment>
<sequence length="173" mass="18444">MTYFVLFLGLCFVLGGLAVASNPSPYYGVVGLVLASVAGCGWLLSLGASFVSLVLFMVYLGGMLVVFVYSVSLAADPFPEAWGDWRVIGYGMGFIVVLVVGVVISGFVEYWNFGVVTVDSVGMFSVRLDFSGVAMFYSWGVGMFLAAGWGLLLTLFVVLELVRGLSRGAIRAV</sequence>
<organism>
    <name type="scientific">Brachyramphus marmoratus</name>
    <name type="common">Marbled murrelet</name>
    <dbReference type="NCBI Taxonomy" id="28694"/>
    <lineage>
        <taxon>Eukaryota</taxon>
        <taxon>Metazoa</taxon>
        <taxon>Chordata</taxon>
        <taxon>Craniata</taxon>
        <taxon>Vertebrata</taxon>
        <taxon>Euteleostomi</taxon>
        <taxon>Archelosauria</taxon>
        <taxon>Archosauria</taxon>
        <taxon>Dinosauria</taxon>
        <taxon>Saurischia</taxon>
        <taxon>Theropoda</taxon>
        <taxon>Coelurosauria</taxon>
        <taxon>Aves</taxon>
        <taxon>Neognathae</taxon>
        <taxon>Neoaves</taxon>
        <taxon>Charadriiformes</taxon>
        <taxon>Alcidae</taxon>
        <taxon>Brachyramphus</taxon>
    </lineage>
</organism>
<feature type="chain" id="PRO_0000118254" description="NADH-ubiquinone oxidoreductase chain 6">
    <location>
        <begin position="1"/>
        <end position="173"/>
    </location>
</feature>
<feature type="transmembrane region" description="Helical" evidence="2">
    <location>
        <begin position="1"/>
        <end position="21"/>
    </location>
</feature>
<feature type="transmembrane region" description="Helical" evidence="2">
    <location>
        <begin position="27"/>
        <end position="47"/>
    </location>
</feature>
<feature type="transmembrane region" description="Helical" evidence="2">
    <location>
        <begin position="48"/>
        <end position="68"/>
    </location>
</feature>
<feature type="transmembrane region" description="Helical" evidence="2">
    <location>
        <begin position="87"/>
        <end position="107"/>
    </location>
</feature>
<feature type="transmembrane region" description="Helical" evidence="2">
    <location>
        <begin position="139"/>
        <end position="159"/>
    </location>
</feature>